<comment type="function">
    <text evidence="6">Catalyzes the transfer of a glycosyl group from a UDP-sugar to an acceptor molecule.</text>
</comment>
<comment type="subcellular location">
    <subcellularLocation>
        <location evidence="4">Microsome membrane</location>
        <topology evidence="7">Single-pass type I membrane protein</topology>
    </subcellularLocation>
</comment>
<comment type="developmental stage">
    <text evidence="4">Expressed in adult female.</text>
</comment>
<comment type="similarity">
    <text evidence="3">Belongs to the UDP-glycosyltransferase family.</text>
</comment>
<dbReference type="EC" id="2.4.1.-" evidence="6"/>
<dbReference type="EMBL" id="KY860727">
    <property type="protein sequence ID" value="ATL15306.1"/>
    <property type="molecule type" value="mRNA"/>
</dbReference>
<dbReference type="SMR" id="A0A291PQF1"/>
<dbReference type="GlyCosmos" id="A0A291PQF1">
    <property type="glycosylation" value="3 sites, No reported glycans"/>
</dbReference>
<dbReference type="GO" id="GO:0005783">
    <property type="term" value="C:endoplasmic reticulum"/>
    <property type="evidence" value="ECO:0007669"/>
    <property type="project" value="UniProtKB-KW"/>
</dbReference>
<dbReference type="GO" id="GO:0016020">
    <property type="term" value="C:membrane"/>
    <property type="evidence" value="ECO:0007669"/>
    <property type="project" value="UniProtKB-KW"/>
</dbReference>
<dbReference type="GO" id="GO:0008194">
    <property type="term" value="F:UDP-glycosyltransferase activity"/>
    <property type="evidence" value="ECO:0007669"/>
    <property type="project" value="InterPro"/>
</dbReference>
<dbReference type="CDD" id="cd03784">
    <property type="entry name" value="GT1_Gtf-like"/>
    <property type="match status" value="1"/>
</dbReference>
<dbReference type="FunFam" id="3.40.50.2000:FF:000050">
    <property type="entry name" value="UDP-glucuronosyltransferase"/>
    <property type="match status" value="1"/>
</dbReference>
<dbReference type="Gene3D" id="3.40.50.2000">
    <property type="entry name" value="Glycogen Phosphorylase B"/>
    <property type="match status" value="1"/>
</dbReference>
<dbReference type="InterPro" id="IPR050271">
    <property type="entry name" value="UDP-glycosyltransferase"/>
</dbReference>
<dbReference type="InterPro" id="IPR002213">
    <property type="entry name" value="UDP_glucos_trans"/>
</dbReference>
<dbReference type="InterPro" id="IPR035595">
    <property type="entry name" value="UDP_glycos_trans_CS"/>
</dbReference>
<dbReference type="PANTHER" id="PTHR48043">
    <property type="entry name" value="EG:EG0003.4 PROTEIN-RELATED"/>
    <property type="match status" value="1"/>
</dbReference>
<dbReference type="PANTHER" id="PTHR48043:SF114">
    <property type="entry name" value="IP04436P-RELATED"/>
    <property type="match status" value="1"/>
</dbReference>
<dbReference type="Pfam" id="PF00201">
    <property type="entry name" value="UDPGT"/>
    <property type="match status" value="1"/>
</dbReference>
<dbReference type="SUPFAM" id="SSF53756">
    <property type="entry name" value="UDP-Glycosyltransferase/glycogen phosphorylase"/>
    <property type="match status" value="1"/>
</dbReference>
<dbReference type="PROSITE" id="PS00375">
    <property type="entry name" value="UDPGT"/>
    <property type="match status" value="1"/>
</dbReference>
<reference evidence="8" key="1">
    <citation type="journal article" date="2017" name="Nat. Commun.">
        <title>Characterization of a membrane-bound C-glucosyltransferase responsible for carminic acid biosynthesis in Dactylopius coccus Costa.</title>
        <authorList>
            <person name="Kannangara R."/>
            <person name="Siukstaite L."/>
            <person name="Borch-Jensen J."/>
            <person name="Madsen B."/>
            <person name="Kongstad K.T."/>
            <person name="Staerk D."/>
            <person name="Bennedsen M."/>
            <person name="Okkels F.T."/>
            <person name="Rasmussen S.A."/>
            <person name="Larsen T.O."/>
            <person name="Frandsen R.J.N."/>
            <person name="Moeller B.L."/>
        </authorList>
    </citation>
    <scope>NUCLEOTIDE SEQUENCE [MRNA]</scope>
    <scope>IDENTIFICATION BY MASS SPECTROMETRY</scope>
    <scope>SUBCELLULAR LOCATION</scope>
    <scope>DEVELOPMENTAL STAGE</scope>
</reference>
<proteinExistence type="evidence at protein level"/>
<feature type="chain" id="PRO_0000450687" description="UDP-glycosyltransferase UGT5">
    <location>
        <begin position="1"/>
        <end position="526"/>
    </location>
</feature>
<feature type="topological domain" description="Lumenal" evidence="6">
    <location>
        <begin position="1"/>
        <end position="474"/>
    </location>
</feature>
<feature type="transmembrane region" description="Helical" evidence="1">
    <location>
        <begin position="475"/>
        <end position="495"/>
    </location>
</feature>
<feature type="topological domain" description="Cytoplasmic" evidence="6">
    <location>
        <begin position="496"/>
        <end position="526"/>
    </location>
</feature>
<feature type="glycosylation site" description="N-linked (GlcNAc...) asparagine" evidence="2">
    <location>
        <position position="49"/>
    </location>
</feature>
<feature type="glycosylation site" description="N-linked (GlcNAc...) asparagine" evidence="2">
    <location>
        <position position="124"/>
    </location>
</feature>
<feature type="glycosylation site" description="N-linked (GlcNAc...) asparagine" evidence="2">
    <location>
        <position position="283"/>
    </location>
</feature>
<organism evidence="8">
    <name type="scientific">Dactylopius coccus</name>
    <name type="common">Cochineal</name>
    <dbReference type="NCBI Taxonomy" id="765876"/>
    <lineage>
        <taxon>Eukaryota</taxon>
        <taxon>Metazoa</taxon>
        <taxon>Ecdysozoa</taxon>
        <taxon>Arthropoda</taxon>
        <taxon>Hexapoda</taxon>
        <taxon>Insecta</taxon>
        <taxon>Pterygota</taxon>
        <taxon>Neoptera</taxon>
        <taxon>Paraneoptera</taxon>
        <taxon>Hemiptera</taxon>
        <taxon>Sternorrhyncha</taxon>
        <taxon>Coccoidea</taxon>
        <taxon>Dactylopiidae</taxon>
        <taxon>Dactylopius</taxon>
    </lineage>
</organism>
<sequence>MIFFYFLTLTSFISVAFSYNILGVFPFQAKSHFGFIDPLLVRLAELGHNVTIYDPYPKSEKLPNYNEIDVSECFVFNTLYEEIDTFIKTAASPFSSLWYSFEETLAVFQKENFDKCAPLRELLNSTVKYDLLITETFLTDITLLFVNKFKIPFITSTPNVPFPWLADRMGNPLNPSYIPNLFSDYPFDKMTFFNRLWNTLFYVMALGGHNAIILKNEEKINKYYFGSSVPSLYNIARETSIMLINAHETLNPVIPLVPGMIPVSGIHIKQPAALPQNIEKFINESTHGVVYFCMGSLLRGETFPAEKRDAFLYAFSKIPQRVLWKWEGEVLPGKSENIMTSKWMPQRDILAHPNVKLFISHGGLLGTSEAVYEGVPVIGIPIFGDQRTNIKALEANGAGELLDYNDISGEVVLEKIQRLINDPKYKESARQLSIRYKDRPMSPLDTAVYWTEYVIRHKGAPHLKTAAVDMPWYQYLLLDVIAFLIFILVSVILIIYYGVKISLRYLCALIFGNSSSLKPTKKVKDN</sequence>
<gene>
    <name evidence="5" type="primary">UGT5</name>
</gene>
<protein>
    <recommendedName>
        <fullName evidence="6">UDP-glycosyltransferase UGT5</fullName>
        <ecNumber evidence="6">2.4.1.-</ecNumber>
    </recommendedName>
    <alternativeName>
        <fullName evidence="5">UDP-glucosyltransferase 5</fullName>
        <shortName evidence="5">DcUGT5</shortName>
    </alternativeName>
</protein>
<accession>A0A291PQF1</accession>
<name>UGT5_DACCO</name>
<keyword id="KW-0256">Endoplasmic reticulum</keyword>
<keyword id="KW-0325">Glycoprotein</keyword>
<keyword id="KW-0328">Glycosyltransferase</keyword>
<keyword id="KW-0472">Membrane</keyword>
<keyword id="KW-0492">Microsome</keyword>
<keyword id="KW-0808">Transferase</keyword>
<keyword id="KW-0812">Transmembrane</keyword>
<keyword id="KW-1133">Transmembrane helix</keyword>
<evidence type="ECO:0000255" key="1"/>
<evidence type="ECO:0000255" key="2">
    <source>
        <dbReference type="PROSITE-ProRule" id="PRU00498"/>
    </source>
</evidence>
<evidence type="ECO:0000255" key="3">
    <source>
        <dbReference type="RuleBase" id="RU003718"/>
    </source>
</evidence>
<evidence type="ECO:0000269" key="4">
    <source>
    </source>
</evidence>
<evidence type="ECO:0000303" key="5">
    <source>
    </source>
</evidence>
<evidence type="ECO:0000305" key="6"/>
<evidence type="ECO:0000305" key="7">
    <source>
    </source>
</evidence>
<evidence type="ECO:0000312" key="8">
    <source>
        <dbReference type="EMBL" id="ATL15306.1"/>
    </source>
</evidence>